<protein>
    <recommendedName>
        <fullName>UPF0488 protein C8orf33 homolog</fullName>
    </recommendedName>
</protein>
<comment type="similarity">
    <text evidence="3">Belongs to the UPF0488 family.</text>
</comment>
<proteinExistence type="evidence at transcript level"/>
<name>CH033_PONAB</name>
<keyword id="KW-0007">Acetylation</keyword>
<keyword id="KW-0488">Methylation</keyword>
<keyword id="KW-0597">Phosphoprotein</keyword>
<keyword id="KW-1185">Reference proteome</keyword>
<dbReference type="EMBL" id="CR857849">
    <property type="protein sequence ID" value="CAH90103.1"/>
    <property type="molecule type" value="mRNA"/>
</dbReference>
<dbReference type="RefSeq" id="NP_001127237.1">
    <property type="nucleotide sequence ID" value="NM_001133765.1"/>
</dbReference>
<dbReference type="SMR" id="Q5RDQ4"/>
<dbReference type="FunCoup" id="Q5RDQ4">
    <property type="interactions" value="1438"/>
</dbReference>
<dbReference type="STRING" id="9601.ENSPPYP00000021307"/>
<dbReference type="GeneID" id="100174292"/>
<dbReference type="KEGG" id="pon:100174292"/>
<dbReference type="CTD" id="681282"/>
<dbReference type="eggNOG" id="ENOG502S1RU">
    <property type="taxonomic scope" value="Eukaryota"/>
</dbReference>
<dbReference type="InParanoid" id="Q5RDQ4"/>
<dbReference type="OrthoDB" id="20277at2759"/>
<dbReference type="Proteomes" id="UP000001595">
    <property type="component" value="Unplaced"/>
</dbReference>
<dbReference type="InterPro" id="IPR029274">
    <property type="entry name" value="DUF4615"/>
</dbReference>
<dbReference type="PANTHER" id="PTHR13602">
    <property type="entry name" value="UPF0488 PROTEIN C8ORF33"/>
    <property type="match status" value="1"/>
</dbReference>
<dbReference type="PANTHER" id="PTHR13602:SF2">
    <property type="entry name" value="UPF0488 PROTEIN C8ORF33"/>
    <property type="match status" value="1"/>
</dbReference>
<dbReference type="Pfam" id="PF15393">
    <property type="entry name" value="DUF4615"/>
    <property type="match status" value="1"/>
</dbReference>
<accession>Q5RDQ4</accession>
<evidence type="ECO:0000250" key="1">
    <source>
        <dbReference type="UniProtKB" id="Q9H7E9"/>
    </source>
</evidence>
<evidence type="ECO:0000256" key="2">
    <source>
        <dbReference type="SAM" id="MobiDB-lite"/>
    </source>
</evidence>
<evidence type="ECO:0000305" key="3"/>
<reference key="1">
    <citation type="submission" date="2004-11" db="EMBL/GenBank/DDBJ databases">
        <authorList>
            <consortium name="The German cDNA consortium"/>
        </authorList>
    </citation>
    <scope>NUCLEOTIDE SEQUENCE [LARGE SCALE MRNA]</scope>
    <source>
        <tissue>Heart</tissue>
    </source>
</reference>
<feature type="initiator methionine" description="Removed" evidence="1">
    <location>
        <position position="1"/>
    </location>
</feature>
<feature type="chain" id="PRO_0000304984" description="UPF0488 protein C8orf33 homolog">
    <location>
        <begin position="2"/>
        <end position="229"/>
    </location>
</feature>
<feature type="region of interest" description="Disordered" evidence="2">
    <location>
        <begin position="55"/>
        <end position="101"/>
    </location>
</feature>
<feature type="compositionally biased region" description="Basic residues" evidence="2">
    <location>
        <begin position="70"/>
        <end position="79"/>
    </location>
</feature>
<feature type="modified residue" description="N-acetylalanine" evidence="1">
    <location>
        <position position="2"/>
    </location>
</feature>
<feature type="modified residue" description="Omega-N-methylarginine" evidence="1">
    <location>
        <position position="27"/>
    </location>
</feature>
<feature type="modified residue" description="Phosphoserine" evidence="1">
    <location>
        <position position="82"/>
    </location>
</feature>
<sequence length="229" mass="25028">MAALGHLAGEAAAVPGLGTPCASRRHRLSGPVSSAGNPSTVCLCPGQPTCSNADSRAHPLGDEGGTASKKQNKKKKTRNRASVANGGEKASEKLAPEEVPLSAEAQTQQLAQELAWCVEQLELGLKRQKPNPKQKEQAIGAIRTLRSKRTPLPRKRQLMHSLFGDYRAQMEAEWREALRALRAAAYSAQVQPVDGATRKKSQRVCRPRPIWRAKATLDLPDEEFKFNFF</sequence>
<organism>
    <name type="scientific">Pongo abelii</name>
    <name type="common">Sumatran orangutan</name>
    <name type="synonym">Pongo pygmaeus abelii</name>
    <dbReference type="NCBI Taxonomy" id="9601"/>
    <lineage>
        <taxon>Eukaryota</taxon>
        <taxon>Metazoa</taxon>
        <taxon>Chordata</taxon>
        <taxon>Craniata</taxon>
        <taxon>Vertebrata</taxon>
        <taxon>Euteleostomi</taxon>
        <taxon>Mammalia</taxon>
        <taxon>Eutheria</taxon>
        <taxon>Euarchontoglires</taxon>
        <taxon>Primates</taxon>
        <taxon>Haplorrhini</taxon>
        <taxon>Catarrhini</taxon>
        <taxon>Hominidae</taxon>
        <taxon>Pongo</taxon>
    </lineage>
</organism>